<keyword id="KW-0963">Cytoplasm</keyword>
<keyword id="KW-0235">DNA replication</keyword>
<keyword id="KW-0239">DNA-directed DNA polymerase</keyword>
<keyword id="KW-0269">Exonuclease</keyword>
<keyword id="KW-0378">Hydrolase</keyword>
<keyword id="KW-0540">Nuclease</keyword>
<keyword id="KW-0548">Nucleotidyltransferase</keyword>
<keyword id="KW-0808">Transferase</keyword>
<comment type="function">
    <text evidence="1">Required for replicative DNA synthesis. This DNA polymerase also exhibits 3' to 5' exonuclease activity.</text>
</comment>
<comment type="catalytic activity">
    <reaction evidence="1">
        <text>DNA(n) + a 2'-deoxyribonucleoside 5'-triphosphate = DNA(n+1) + diphosphate</text>
        <dbReference type="Rhea" id="RHEA:22508"/>
        <dbReference type="Rhea" id="RHEA-COMP:17339"/>
        <dbReference type="Rhea" id="RHEA-COMP:17340"/>
        <dbReference type="ChEBI" id="CHEBI:33019"/>
        <dbReference type="ChEBI" id="CHEBI:61560"/>
        <dbReference type="ChEBI" id="CHEBI:173112"/>
        <dbReference type="EC" id="2.7.7.7"/>
    </reaction>
</comment>
<comment type="subcellular location">
    <subcellularLocation>
        <location evidence="1">Cytoplasm</location>
    </subcellularLocation>
</comment>
<comment type="similarity">
    <text evidence="1">Belongs to the DNA polymerase type-C family. PolC subfamily.</text>
</comment>
<proteinExistence type="inferred from homology"/>
<organism>
    <name type="scientific">Streptococcus pyogenes serotype M3 (strain ATCC BAA-595 / MGAS315)</name>
    <dbReference type="NCBI Taxonomy" id="198466"/>
    <lineage>
        <taxon>Bacteria</taxon>
        <taxon>Bacillati</taxon>
        <taxon>Bacillota</taxon>
        <taxon>Bacilli</taxon>
        <taxon>Lactobacillales</taxon>
        <taxon>Streptococcaceae</taxon>
        <taxon>Streptococcus</taxon>
    </lineage>
</organism>
<name>DPO3_STRP3</name>
<dbReference type="EC" id="2.7.7.7" evidence="1"/>
<dbReference type="EMBL" id="AE014074">
    <property type="protein sequence ID" value="AAM80294.1"/>
    <property type="molecule type" value="Genomic_DNA"/>
</dbReference>
<dbReference type="RefSeq" id="WP_011055020.1">
    <property type="nucleotide sequence ID" value="NC_004070.1"/>
</dbReference>
<dbReference type="SMR" id="P0DA76"/>
<dbReference type="KEGG" id="spg:SpyM3_1687"/>
<dbReference type="HOGENOM" id="CLU_003297_2_0_9"/>
<dbReference type="Proteomes" id="UP000000564">
    <property type="component" value="Chromosome"/>
</dbReference>
<dbReference type="GO" id="GO:0005737">
    <property type="term" value="C:cytoplasm"/>
    <property type="evidence" value="ECO:0007669"/>
    <property type="project" value="UniProtKB-SubCell"/>
</dbReference>
<dbReference type="GO" id="GO:0008408">
    <property type="term" value="F:3'-5' exonuclease activity"/>
    <property type="evidence" value="ECO:0007669"/>
    <property type="project" value="UniProtKB-UniRule"/>
</dbReference>
<dbReference type="GO" id="GO:0003677">
    <property type="term" value="F:DNA binding"/>
    <property type="evidence" value="ECO:0007669"/>
    <property type="project" value="UniProtKB-UniRule"/>
</dbReference>
<dbReference type="GO" id="GO:0003887">
    <property type="term" value="F:DNA-directed DNA polymerase activity"/>
    <property type="evidence" value="ECO:0007669"/>
    <property type="project" value="UniProtKB-UniRule"/>
</dbReference>
<dbReference type="GO" id="GO:0006261">
    <property type="term" value="P:DNA-templated DNA replication"/>
    <property type="evidence" value="ECO:0007669"/>
    <property type="project" value="UniProtKB-UniRule"/>
</dbReference>
<dbReference type="CDD" id="cd06127">
    <property type="entry name" value="DEDDh"/>
    <property type="match status" value="1"/>
</dbReference>
<dbReference type="CDD" id="cd07435">
    <property type="entry name" value="PHP_PolIIIA_POLC"/>
    <property type="match status" value="1"/>
</dbReference>
<dbReference type="CDD" id="cd04484">
    <property type="entry name" value="polC_OBF"/>
    <property type="match status" value="1"/>
</dbReference>
<dbReference type="FunFam" id="3.30.420.10:FF:000045">
    <property type="entry name" value="3'-5' exonuclease DinG"/>
    <property type="match status" value="1"/>
</dbReference>
<dbReference type="Gene3D" id="1.10.150.870">
    <property type="match status" value="1"/>
</dbReference>
<dbReference type="Gene3D" id="3.30.1900.20">
    <property type="match status" value="1"/>
</dbReference>
<dbReference type="Gene3D" id="6.10.140.1510">
    <property type="match status" value="1"/>
</dbReference>
<dbReference type="Gene3D" id="3.20.20.140">
    <property type="entry name" value="Metal-dependent hydrolases"/>
    <property type="match status" value="1"/>
</dbReference>
<dbReference type="Gene3D" id="2.40.50.140">
    <property type="entry name" value="Nucleic acid-binding proteins"/>
    <property type="match status" value="1"/>
</dbReference>
<dbReference type="Gene3D" id="1.10.150.700">
    <property type="entry name" value="PolC, middle finger domain"/>
    <property type="match status" value="1"/>
</dbReference>
<dbReference type="Gene3D" id="3.30.420.10">
    <property type="entry name" value="Ribonuclease H-like superfamily/Ribonuclease H"/>
    <property type="match status" value="1"/>
</dbReference>
<dbReference type="HAMAP" id="MF_00356">
    <property type="entry name" value="DNApol_PolC"/>
    <property type="match status" value="1"/>
</dbReference>
<dbReference type="InterPro" id="IPR011708">
    <property type="entry name" value="DNA_pol3_alpha_NTPase_dom"/>
</dbReference>
<dbReference type="InterPro" id="IPR040982">
    <property type="entry name" value="DNA_pol3_finger"/>
</dbReference>
<dbReference type="InterPro" id="IPR024754">
    <property type="entry name" value="DNA_PolC-like_N_II"/>
</dbReference>
<dbReference type="InterPro" id="IPR028112">
    <property type="entry name" value="DNA_PolC-type_N_I"/>
</dbReference>
<dbReference type="InterPro" id="IPR004805">
    <property type="entry name" value="DnaE2/DnaE/PolC"/>
</dbReference>
<dbReference type="InterPro" id="IPR029460">
    <property type="entry name" value="DNAPol_HHH"/>
</dbReference>
<dbReference type="InterPro" id="IPR006054">
    <property type="entry name" value="DnaQ"/>
</dbReference>
<dbReference type="InterPro" id="IPR013520">
    <property type="entry name" value="Exonuclease_RNaseT/DNA_pol3"/>
</dbReference>
<dbReference type="InterPro" id="IPR012340">
    <property type="entry name" value="NA-bd_OB-fold"/>
</dbReference>
<dbReference type="InterPro" id="IPR004013">
    <property type="entry name" value="PHP_dom"/>
</dbReference>
<dbReference type="InterPro" id="IPR003141">
    <property type="entry name" value="Pol/His_phosphatase_N"/>
</dbReference>
<dbReference type="InterPro" id="IPR016195">
    <property type="entry name" value="Pol/histidinol_Pase-like"/>
</dbReference>
<dbReference type="InterPro" id="IPR006308">
    <property type="entry name" value="Pol_III_a_PolC-type_gram_pos"/>
</dbReference>
<dbReference type="InterPro" id="IPR044923">
    <property type="entry name" value="PolC_middle_finger_sf"/>
</dbReference>
<dbReference type="InterPro" id="IPR012337">
    <property type="entry name" value="RNaseH-like_sf"/>
</dbReference>
<dbReference type="InterPro" id="IPR036397">
    <property type="entry name" value="RNaseH_sf"/>
</dbReference>
<dbReference type="NCBIfam" id="TIGR00573">
    <property type="entry name" value="dnaq"/>
    <property type="match status" value="1"/>
</dbReference>
<dbReference type="NCBIfam" id="TIGR01405">
    <property type="entry name" value="polC_Gram_pos"/>
    <property type="match status" value="1"/>
</dbReference>
<dbReference type="NCBIfam" id="NF001688">
    <property type="entry name" value="PRK00448.1"/>
    <property type="match status" value="1"/>
</dbReference>
<dbReference type="PANTHER" id="PTHR32294:SF5">
    <property type="entry name" value="DNA POLYMERASE III POLC-TYPE"/>
    <property type="match status" value="1"/>
</dbReference>
<dbReference type="PANTHER" id="PTHR32294">
    <property type="entry name" value="DNA POLYMERASE III SUBUNIT ALPHA"/>
    <property type="match status" value="1"/>
</dbReference>
<dbReference type="Pfam" id="PF14480">
    <property type="entry name" value="DNA_pol3_a_NI"/>
    <property type="match status" value="1"/>
</dbReference>
<dbReference type="Pfam" id="PF11490">
    <property type="entry name" value="DNA_pol3_a_NII"/>
    <property type="match status" value="1"/>
</dbReference>
<dbReference type="Pfam" id="PF07733">
    <property type="entry name" value="DNA_pol3_alpha"/>
    <property type="match status" value="2"/>
</dbReference>
<dbReference type="Pfam" id="PF17657">
    <property type="entry name" value="DNA_pol3_finger"/>
    <property type="match status" value="1"/>
</dbReference>
<dbReference type="Pfam" id="PF14579">
    <property type="entry name" value="HHH_6"/>
    <property type="match status" value="1"/>
</dbReference>
<dbReference type="Pfam" id="PF02811">
    <property type="entry name" value="PHP"/>
    <property type="match status" value="2"/>
</dbReference>
<dbReference type="Pfam" id="PF00929">
    <property type="entry name" value="RNase_T"/>
    <property type="match status" value="1"/>
</dbReference>
<dbReference type="SMART" id="SM00479">
    <property type="entry name" value="EXOIII"/>
    <property type="match status" value="1"/>
</dbReference>
<dbReference type="SMART" id="SM00481">
    <property type="entry name" value="POLIIIAc"/>
    <property type="match status" value="1"/>
</dbReference>
<dbReference type="SUPFAM" id="SSF50249">
    <property type="entry name" value="Nucleic acid-binding proteins"/>
    <property type="match status" value="1"/>
</dbReference>
<dbReference type="SUPFAM" id="SSF89550">
    <property type="entry name" value="PHP domain-like"/>
    <property type="match status" value="1"/>
</dbReference>
<dbReference type="SUPFAM" id="SSF53098">
    <property type="entry name" value="Ribonuclease H-like"/>
    <property type="match status" value="1"/>
</dbReference>
<gene>
    <name evidence="1" type="primary">polC</name>
    <name type="ordered locus">SpyM3_1687</name>
</gene>
<evidence type="ECO:0000255" key="1">
    <source>
        <dbReference type="HAMAP-Rule" id="MF_00356"/>
    </source>
</evidence>
<reference key="1">
    <citation type="journal article" date="2002" name="Proc. Natl. Acad. Sci. U.S.A.">
        <title>Genome sequence of a serotype M3 strain of group A Streptococcus: phage-encoded toxins, the high-virulence phenotype, and clone emergence.</title>
        <authorList>
            <person name="Beres S.B."/>
            <person name="Sylva G.L."/>
            <person name="Barbian K.D."/>
            <person name="Lei B."/>
            <person name="Hoff J.S."/>
            <person name="Mammarella N.D."/>
            <person name="Liu M.-Y."/>
            <person name="Smoot J.C."/>
            <person name="Porcella S.F."/>
            <person name="Parkins L.D."/>
            <person name="Campbell D.S."/>
            <person name="Smith T.M."/>
            <person name="McCormick J.K."/>
            <person name="Leung D.Y.M."/>
            <person name="Schlievert P.M."/>
            <person name="Musser J.M."/>
        </authorList>
    </citation>
    <scope>NUCLEOTIDE SEQUENCE [LARGE SCALE GENOMIC DNA]</scope>
    <source>
        <strain>ATCC BAA-595 / MGAS315</strain>
    </source>
</reference>
<protein>
    <recommendedName>
        <fullName>DNA polymerase III polC-type</fullName>
        <shortName evidence="1">PolIII</shortName>
        <ecNumber evidence="1">2.7.7.7</ecNumber>
    </recommendedName>
</protein>
<sequence>MSDLFAKLMDQIEMPLDMRRSSAFSSADIIEVKVHSVSRLWEFHFAFAAVLPIATYRELHDRLIRTFEAADIKVTFDIQAAQVDYSDDLLQAYYQEAFEHAPCNSASFKSSFSKLKVTYEDDKLIIAAPGFVNNDHFRNNHLPNLVKQLEAFGFGTLTIDMVSDQEMTEHLTKNFVSSRQALVKKAVQDNLEAQKSLEAMMPPVEEATPAPKFDYKERAAKRQAGFEKATITPMIEIETEENRIVFEGMVFDVERKTTRTGRHIINFKMTDYTSSFALQKWAKDDEELRKFDMIAKGVWLRVQGNIETNPFTKSLTMNVQQVKEIVHHERKDLMPEGQKRVELHAHTNMSTMDALLTVESLIDTAAKWGHKAVAITDHANVQSFPHGYHRARKAGIKAIFGLEANIVEDKVPISYDPVDMDLHEATYVVFDVETTGLSAMNNDLIQIAASKMFKGNIVEQFDEFIDPGHPLSAFTTELTGITDKHLQGAKPLVTVLKAFQDFCKDSILVAHNASFDVGFMNANYERHDLPKITQPVIDTLEFARNLYPEYKRHGLGPLTKRFQVSLDHHHMANYDAEATGRLLFIFLKDAREKHGIKNLLQLNTDLVAEDSYKKARIKHATIYVQNQVGLKNMFKLVSLSNIKYFEGVPRIPRTVLDAHREGLLLGTACSDGEVFDAVLTKGIDAAVDLAKYYDFIEIMPPAIYQPLVVRELIKDQAGIEQVIRDLIEVGKRAKKPVLATGNVHYLEPEEEIYREIIVRSLGQGAMINRTIGRGEGAQPAPLPKAHFRTTNEMLDEFAFLGKDLAYQVVVENTQDFADRIEEVEVVKGDLYTPYIDKAEETVAELTYQKAFEIYGNPLPDIIDLRIEKELTSILGNGFAVIYLASQMLVNRSNERGYLVGSRGSVGSSFVATMIGITEVNPMPPHYVCPSCQHSEFITDGSVGSGYDLPNKACPKCGTPYQKDGQDIPFETFLGFDGDKVPDIDLNFSGDDQPSAHLDVRDIFGAEYAFRAGTVGTVAEKTAYGFVKGYERDYGKFYRDAEVDRLAAGAAGVKRTTGQHPGGIVVIPNYMDVYDFTPVQYPADDVTASWQTTHFNFHDIDENVLKLDILGHDDPTMIRKLQDLSGIDPITIPADDPGVMALFSGTEVLGVTPEQIGTPTGMLGIPEFGTNFVRGMVNETHPTTFAELLQLSGLSHGTDVWLGNAQDLIKEGIATLKTVIGCRDDIMVYLMHAGLEPKMAFTIMERVRKGLWLKISEEERNGYIDAMRENNVPDWYIESCGKIKYMFPKAHAAAYVLMALRVAYFKVHHPIMYYCAYFSIRAKAFELKTMSGGLDAVKARMEDITIKRKNNEATNVENDLFTTLEIVNEMLERGFKFGKLDLYKSDAIEFQIKGDTLIPPFIALEGLGENVAKQIVKARQEGEFLSKMELRKRGGASSTLVEKMDEMGILGNMPEDNQLSLFDDFF</sequence>
<feature type="chain" id="PRO_0000204602" description="DNA polymerase III polC-type">
    <location>
        <begin position="1"/>
        <end position="1465"/>
    </location>
</feature>
<feature type="domain" description="Exonuclease">
    <location>
        <begin position="427"/>
        <end position="583"/>
    </location>
</feature>
<accession>P0DA76</accession>
<accession>Q8K5S8</accession>